<evidence type="ECO:0000250" key="1"/>
<evidence type="ECO:0000255" key="2"/>
<evidence type="ECO:0000269" key="3">
    <source>
    </source>
</evidence>
<evidence type="ECO:0000269" key="4">
    <source>
    </source>
</evidence>
<evidence type="ECO:0000269" key="5">
    <source>
    </source>
</evidence>
<evidence type="ECO:0000305" key="6"/>
<evidence type="ECO:0007829" key="7">
    <source>
        <dbReference type="PDB" id="6KY4"/>
    </source>
</evidence>
<comment type="function">
    <text evidence="3 4">Contributes to oxidative stress resistance by reducing cysteine-sulfinic acid formed under exposure to oxidants in a peroxiredoxin. May catalyze the reduction in a multi-step process by acting both as a specific phosphotransferase and a thioltransferase. Required to switch on the antioxidant pathway to regenerate the oxidative damage. In mitochondrion, catalyzes the retroreduction of the inactive sulfinic form of atypical Prx IIF using thioredoxin as reducing agent.</text>
</comment>
<comment type="catalytic activity">
    <reaction>
        <text>S-hydroxy-S-oxy-L-cysteinyl-[peroxiredoxin] + [protein]-dithiol + ATP = S-hydroxy-L-cysteinyl-[peroxiredoxin] + [protein]-disulfide + ADP + phosphate</text>
        <dbReference type="Rhea" id="RHEA:17545"/>
        <dbReference type="Rhea" id="RHEA-COMP:10593"/>
        <dbReference type="Rhea" id="RHEA-COMP:10594"/>
        <dbReference type="Rhea" id="RHEA-COMP:13681"/>
        <dbReference type="Rhea" id="RHEA-COMP:17976"/>
        <dbReference type="ChEBI" id="CHEBI:29950"/>
        <dbReference type="ChEBI" id="CHEBI:30616"/>
        <dbReference type="ChEBI" id="CHEBI:43474"/>
        <dbReference type="ChEBI" id="CHEBI:50058"/>
        <dbReference type="ChEBI" id="CHEBI:61973"/>
        <dbReference type="ChEBI" id="CHEBI:61974"/>
        <dbReference type="ChEBI" id="CHEBI:456216"/>
        <dbReference type="EC" id="1.8.98.2"/>
    </reaction>
</comment>
<comment type="biophysicochemical properties">
    <kinetics>
        <KM evidence="4">79 uM for peroxiredoxin-(S-hydroxy-S-oxocysteine) (in the presence of 1 mM of ATP)</KM>
        <KM evidence="4">29 uM for ATP (in the presence of 40 uM of peroxiredoxin-(S-hydroxy-S-oxocysteine))</KM>
        <text>kcat is 0.66 min(-1) with peroxiredoxin-(S-hydroxy-S-oxocysteine) as substrate (in the presence of 1 mM of ATP) and 0.025 min(-1) with ATP as substrate (in the presence of 40 uM of peroxiredoxin-(S-hydroxy-S-oxocysteine)).</text>
    </kinetics>
    <phDependence>
        <text evidence="4">Optimum pH is 7.8.</text>
    </phDependence>
</comment>
<comment type="subcellular location">
    <subcellularLocation>
        <location>Plastid</location>
        <location>Chloroplast</location>
    </subcellularLocation>
    <subcellularLocation>
        <location>Mitochondrion</location>
    </subcellularLocation>
</comment>
<comment type="alternative products">
    <event type="alternative splicing"/>
    <isoform>
        <id>Q8GY89-1</id>
        <name>1</name>
        <sequence type="displayed"/>
    </isoform>
    <isoform>
        <id>Q8GY89-2</id>
        <name>2</name>
        <sequence type="described" ref="VSP_044416"/>
    </isoform>
    <text>Additional isoforms seem to exist.</text>
</comment>
<comment type="tissue specificity">
    <text evidence="3">Low expression in photosynthetic tissues such as leaves and sepals.</text>
</comment>
<comment type="disruption phenotype">
    <text evidence="3 4 5">Accumulation of overoxidized peroxiredoxin (Prx) and hyperoxidized form of Prx IIF, especially in response to photooxidative stress, H(2)O(2) treatment and water deficit. Increased tolerance to photooxidative stress generated by high light combined with low temperature. In long days, smaller leaves.</text>
</comment>
<comment type="similarity">
    <text evidence="6">Belongs to the sulfiredoxin family.</text>
</comment>
<comment type="sequence caution" evidence="6">
    <conflict type="erroneous gene model prediction">
        <sequence resource="EMBL-CDS" id="AAD21682"/>
    </conflict>
</comment>
<gene>
    <name type="primary">SRX</name>
    <name type="ordered locus">At1g31170</name>
    <name type="ORF">F28K20.12</name>
</gene>
<feature type="transit peptide" description="Chloroplast and mitochondrion" evidence="2">
    <location>
        <begin position="1"/>
        <end position="22"/>
    </location>
</feature>
<feature type="chain" id="PRO_0000420170" description="Sulfiredoxin, chloroplastic/mitochondrial">
    <location>
        <begin position="23"/>
        <end position="125"/>
    </location>
</feature>
<feature type="disulfide bond" description="Interchain" evidence="1">
    <location>
        <position position="94"/>
    </location>
</feature>
<feature type="splice variant" id="VSP_044416" description="In isoform 2." evidence="6">
    <location>
        <begin position="77"/>
        <end position="78"/>
    </location>
</feature>
<feature type="mutagenesis site" description="Reduced activity. Loss of activity; when associated with A-98." evidence="4">
    <original>R</original>
    <variation>Q</variation>
    <location>
        <position position="50"/>
    </location>
</feature>
<feature type="mutagenesis site" description="Reduced activity." evidence="4">
    <original>K</original>
    <variation>Q</variation>
    <location>
        <position position="62"/>
    </location>
</feature>
<feature type="mutagenesis site" description="Loss of activity." evidence="4 5">
    <original>C</original>
    <variation>S</variation>
    <location>
        <position position="94"/>
    </location>
</feature>
<feature type="mutagenesis site" description="No phenotype. Loss of activity; when associated with Q-50." evidence="4">
    <original>E</original>
    <variation>A</variation>
    <location>
        <position position="98"/>
    </location>
</feature>
<feature type="sequence conflict" description="In Ref. 5; AAM63841." evidence="6" ref="5">
    <original>R</original>
    <variation>K</variation>
    <location>
        <position position="56"/>
    </location>
</feature>
<feature type="strand" evidence="7">
    <location>
        <begin position="40"/>
        <end position="44"/>
    </location>
</feature>
<feature type="helix" evidence="7">
    <location>
        <begin position="45"/>
        <end position="47"/>
    </location>
</feature>
<feature type="helix" evidence="7">
    <location>
        <begin position="51"/>
        <end position="55"/>
    </location>
</feature>
<feature type="helix" evidence="7">
    <location>
        <begin position="60"/>
        <end position="73"/>
    </location>
</feature>
<feature type="strand" evidence="7">
    <location>
        <begin position="79"/>
        <end position="84"/>
    </location>
</feature>
<feature type="strand" evidence="7">
    <location>
        <begin position="87"/>
        <end position="89"/>
    </location>
</feature>
<feature type="helix" evidence="7">
    <location>
        <begin position="94"/>
        <end position="102"/>
    </location>
</feature>
<feature type="strand" evidence="7">
    <location>
        <begin position="106"/>
        <end position="114"/>
    </location>
</feature>
<feature type="helix" evidence="7">
    <location>
        <begin position="117"/>
        <end position="123"/>
    </location>
</feature>
<reference key="1">
    <citation type="journal article" date="2000" name="Nature">
        <title>Sequence and analysis of chromosome 1 of the plant Arabidopsis thaliana.</title>
        <authorList>
            <person name="Theologis A."/>
            <person name="Ecker J.R."/>
            <person name="Palm C.J."/>
            <person name="Federspiel N.A."/>
            <person name="Kaul S."/>
            <person name="White O."/>
            <person name="Alonso J."/>
            <person name="Altafi H."/>
            <person name="Araujo R."/>
            <person name="Bowman C.L."/>
            <person name="Brooks S.Y."/>
            <person name="Buehler E."/>
            <person name="Chan A."/>
            <person name="Chao Q."/>
            <person name="Chen H."/>
            <person name="Cheuk R.F."/>
            <person name="Chin C.W."/>
            <person name="Chung M.K."/>
            <person name="Conn L."/>
            <person name="Conway A.B."/>
            <person name="Conway A.R."/>
            <person name="Creasy T.H."/>
            <person name="Dewar K."/>
            <person name="Dunn P."/>
            <person name="Etgu P."/>
            <person name="Feldblyum T.V."/>
            <person name="Feng J.-D."/>
            <person name="Fong B."/>
            <person name="Fujii C.Y."/>
            <person name="Gill J.E."/>
            <person name="Goldsmith A.D."/>
            <person name="Haas B."/>
            <person name="Hansen N.F."/>
            <person name="Hughes B."/>
            <person name="Huizar L."/>
            <person name="Hunter J.L."/>
            <person name="Jenkins J."/>
            <person name="Johnson-Hopson C."/>
            <person name="Khan S."/>
            <person name="Khaykin E."/>
            <person name="Kim C.J."/>
            <person name="Koo H.L."/>
            <person name="Kremenetskaia I."/>
            <person name="Kurtz D.B."/>
            <person name="Kwan A."/>
            <person name="Lam B."/>
            <person name="Langin-Hooper S."/>
            <person name="Lee A."/>
            <person name="Lee J.M."/>
            <person name="Lenz C.A."/>
            <person name="Li J.H."/>
            <person name="Li Y.-P."/>
            <person name="Lin X."/>
            <person name="Liu S.X."/>
            <person name="Liu Z.A."/>
            <person name="Luros J.S."/>
            <person name="Maiti R."/>
            <person name="Marziali A."/>
            <person name="Militscher J."/>
            <person name="Miranda M."/>
            <person name="Nguyen M."/>
            <person name="Nierman W.C."/>
            <person name="Osborne B.I."/>
            <person name="Pai G."/>
            <person name="Peterson J."/>
            <person name="Pham P.K."/>
            <person name="Rizzo M."/>
            <person name="Rooney T."/>
            <person name="Rowley D."/>
            <person name="Sakano H."/>
            <person name="Salzberg S.L."/>
            <person name="Schwartz J.R."/>
            <person name="Shinn P."/>
            <person name="Southwick A.M."/>
            <person name="Sun H."/>
            <person name="Tallon L.J."/>
            <person name="Tambunga G."/>
            <person name="Toriumi M.J."/>
            <person name="Town C.D."/>
            <person name="Utterback T."/>
            <person name="Van Aken S."/>
            <person name="Vaysberg M."/>
            <person name="Vysotskaia V.S."/>
            <person name="Walker M."/>
            <person name="Wu D."/>
            <person name="Yu G."/>
            <person name="Fraser C.M."/>
            <person name="Venter J.C."/>
            <person name="Davis R.W."/>
        </authorList>
    </citation>
    <scope>NUCLEOTIDE SEQUENCE [LARGE SCALE GENOMIC DNA]</scope>
    <source>
        <strain>cv. Columbia</strain>
    </source>
</reference>
<reference key="2">
    <citation type="journal article" date="2017" name="Plant J.">
        <title>Araport11: a complete reannotation of the Arabidopsis thaliana reference genome.</title>
        <authorList>
            <person name="Cheng C.Y."/>
            <person name="Krishnakumar V."/>
            <person name="Chan A.P."/>
            <person name="Thibaud-Nissen F."/>
            <person name="Schobel S."/>
            <person name="Town C.D."/>
        </authorList>
    </citation>
    <scope>GENOME REANNOTATION</scope>
    <source>
        <strain>cv. Columbia</strain>
    </source>
</reference>
<reference key="3">
    <citation type="journal article" date="2002" name="Science">
        <title>Functional annotation of a full-length Arabidopsis cDNA collection.</title>
        <authorList>
            <person name="Seki M."/>
            <person name="Narusaka M."/>
            <person name="Kamiya A."/>
            <person name="Ishida J."/>
            <person name="Satou M."/>
            <person name="Sakurai T."/>
            <person name="Nakajima M."/>
            <person name="Enju A."/>
            <person name="Akiyama K."/>
            <person name="Oono Y."/>
            <person name="Muramatsu M."/>
            <person name="Hayashizaki Y."/>
            <person name="Kawai J."/>
            <person name="Carninci P."/>
            <person name="Itoh M."/>
            <person name="Ishii Y."/>
            <person name="Arakawa T."/>
            <person name="Shibata K."/>
            <person name="Shinagawa A."/>
            <person name="Shinozaki K."/>
        </authorList>
    </citation>
    <scope>NUCLEOTIDE SEQUENCE [LARGE SCALE MRNA] (ISOFORM 1)</scope>
    <source>
        <strain>cv. Columbia</strain>
    </source>
</reference>
<reference key="4">
    <citation type="journal article" date="2003" name="Science">
        <title>Empirical analysis of transcriptional activity in the Arabidopsis genome.</title>
        <authorList>
            <person name="Yamada K."/>
            <person name="Lim J."/>
            <person name="Dale J.M."/>
            <person name="Chen H."/>
            <person name="Shinn P."/>
            <person name="Palm C.J."/>
            <person name="Southwick A.M."/>
            <person name="Wu H.C."/>
            <person name="Kim C.J."/>
            <person name="Nguyen M."/>
            <person name="Pham P.K."/>
            <person name="Cheuk R.F."/>
            <person name="Karlin-Newmann G."/>
            <person name="Liu S.X."/>
            <person name="Lam B."/>
            <person name="Sakano H."/>
            <person name="Wu T."/>
            <person name="Yu G."/>
            <person name="Miranda M."/>
            <person name="Quach H.L."/>
            <person name="Tripp M."/>
            <person name="Chang C.H."/>
            <person name="Lee J.M."/>
            <person name="Toriumi M.J."/>
            <person name="Chan M.M."/>
            <person name="Tang C.C."/>
            <person name="Onodera C.S."/>
            <person name="Deng J.M."/>
            <person name="Akiyama K."/>
            <person name="Ansari Y."/>
            <person name="Arakawa T."/>
            <person name="Banh J."/>
            <person name="Banno F."/>
            <person name="Bowser L."/>
            <person name="Brooks S.Y."/>
            <person name="Carninci P."/>
            <person name="Chao Q."/>
            <person name="Choy N."/>
            <person name="Enju A."/>
            <person name="Goldsmith A.D."/>
            <person name="Gurjal M."/>
            <person name="Hansen N.F."/>
            <person name="Hayashizaki Y."/>
            <person name="Johnson-Hopson C."/>
            <person name="Hsuan V.W."/>
            <person name="Iida K."/>
            <person name="Karnes M."/>
            <person name="Khan S."/>
            <person name="Koesema E."/>
            <person name="Ishida J."/>
            <person name="Jiang P.X."/>
            <person name="Jones T."/>
            <person name="Kawai J."/>
            <person name="Kamiya A."/>
            <person name="Meyers C."/>
            <person name="Nakajima M."/>
            <person name="Narusaka M."/>
            <person name="Seki M."/>
            <person name="Sakurai T."/>
            <person name="Satou M."/>
            <person name="Tamse R."/>
            <person name="Vaysberg M."/>
            <person name="Wallender E.K."/>
            <person name="Wong C."/>
            <person name="Yamamura Y."/>
            <person name="Yuan S."/>
            <person name="Shinozaki K."/>
            <person name="Davis R.W."/>
            <person name="Theologis A."/>
            <person name="Ecker J.R."/>
        </authorList>
    </citation>
    <scope>NUCLEOTIDE SEQUENCE [LARGE SCALE MRNA] (ISOFORM 1)</scope>
    <source>
        <strain>cv. Columbia</strain>
    </source>
</reference>
<reference key="5">
    <citation type="submission" date="2002-03" db="EMBL/GenBank/DDBJ databases">
        <title>Full-length cDNA from Arabidopsis thaliana.</title>
        <authorList>
            <person name="Brover V.V."/>
            <person name="Troukhan M.E."/>
            <person name="Alexandrov N.A."/>
            <person name="Lu Y.-P."/>
            <person name="Flavell R.B."/>
            <person name="Feldmann K.A."/>
        </authorList>
    </citation>
    <scope>NUCLEOTIDE SEQUENCE [LARGE SCALE MRNA] (ISOFORM 1)</scope>
</reference>
<reference key="6">
    <citation type="journal article" date="2007" name="Plant J.">
        <title>The Arabidopsis thaliana sulfiredoxin is a plastidic cysteine-sulfinic acid reductase involved in the photooxidative stress response.</title>
        <authorList>
            <person name="Rey P."/>
            <person name="Becuwe N."/>
            <person name="Barrault M.-B."/>
            <person name="Rumeau D."/>
            <person name="Havaux M."/>
            <person name="Biteau B."/>
            <person name="Toledano M.B."/>
        </authorList>
    </citation>
    <scope>FUNCTION</scope>
    <scope>DISRUPTION PHENOTYPE</scope>
    <scope>SUBCELLULAR LOCATION</scope>
    <scope>TISSUE SPECIFICITY</scope>
</reference>
<reference key="7">
    <citation type="journal article" date="2010" name="J. Exp. Bot.">
        <title>Characterization of plant sulfiredoxin and role of sulphinic form of 2-Cys peroxiredoxin.</title>
        <authorList>
            <person name="Iglesias-Baena I."/>
            <person name="Barranco-Medina S."/>
            <person name="Lazaro-Payo A."/>
            <person name="Lopez-Jaramillo F.J."/>
            <person name="Sevilla F."/>
            <person name="Lazaro J.-J."/>
        </authorList>
    </citation>
    <scope>FUNCTION</scope>
    <scope>DISRUPTION PHENOTYPE</scope>
    <scope>MUTAGENESIS OF ARG-50; LYS-62; CYS-94 AND GLU-98</scope>
    <scope>BIOPHYSICOCHEMICAL PROPERTIES</scope>
    <source>
        <strain>cv. Columbia</strain>
    </source>
</reference>
<reference key="8">
    <citation type="journal article" date="2011" name="Plant Physiol.">
        <title>The dual-targeted plant sulfiredoxin retroreduces the sulfinic form of atypical mitochondrial peroxiredoxin.</title>
        <authorList>
            <person name="Iglesias-Baena I."/>
            <person name="Barranco-Medina S."/>
            <person name="Sevilla F."/>
            <person name="Lazaro J.-J."/>
        </authorList>
    </citation>
    <scope>SUBCELLULAR LOCATION</scope>
    <scope>MUTAGENESIS OF CYS-94</scope>
    <scope>DISRUPTION PHENOTYPE</scope>
    <source>
        <strain>cv. Columbia</strain>
    </source>
</reference>
<accession>Q8GY89</accession>
<accession>A8MS24</accession>
<accession>Q8LC51</accession>
<accession>Q9SA12</accession>
<keyword id="KW-0002">3D-structure</keyword>
<keyword id="KW-0025">Alternative splicing</keyword>
<keyword id="KW-0049">Antioxidant</keyword>
<keyword id="KW-0067">ATP-binding</keyword>
<keyword id="KW-0150">Chloroplast</keyword>
<keyword id="KW-1015">Disulfide bond</keyword>
<keyword id="KW-0496">Mitochondrion</keyword>
<keyword id="KW-0547">Nucleotide-binding</keyword>
<keyword id="KW-0560">Oxidoreductase</keyword>
<keyword id="KW-0934">Plastid</keyword>
<keyword id="KW-1185">Reference proteome</keyword>
<keyword id="KW-0809">Transit peptide</keyword>
<organism>
    <name type="scientific">Arabidopsis thaliana</name>
    <name type="common">Mouse-ear cress</name>
    <dbReference type="NCBI Taxonomy" id="3702"/>
    <lineage>
        <taxon>Eukaryota</taxon>
        <taxon>Viridiplantae</taxon>
        <taxon>Streptophyta</taxon>
        <taxon>Embryophyta</taxon>
        <taxon>Tracheophyta</taxon>
        <taxon>Spermatophyta</taxon>
        <taxon>Magnoliopsida</taxon>
        <taxon>eudicotyledons</taxon>
        <taxon>Gunneridae</taxon>
        <taxon>Pentapetalae</taxon>
        <taxon>rosids</taxon>
        <taxon>malvids</taxon>
        <taxon>Brassicales</taxon>
        <taxon>Brassicaceae</taxon>
        <taxon>Camelineae</taxon>
        <taxon>Arabidopsis</taxon>
    </lineage>
</organism>
<sequence length="125" mass="13914">MANLMMRLPISLRSFSVSASSSNGSPPVIGGSSGGVGPMIVELPLEKIRRPLMRTRSNDQNKVKELMDSIRQIGLQVPIDVIEVDGTYYGFSGCHRYEAHQKLGLPTIRCKIRKGTKETLRHHLR</sequence>
<name>SRX_ARATH</name>
<proteinExistence type="evidence at protein level"/>
<protein>
    <recommendedName>
        <fullName>Sulfiredoxin, chloroplastic/mitochondrial</fullName>
        <shortName>AtSRX</shortName>
        <ecNumber>1.8.98.2</ecNumber>
    </recommendedName>
</protein>
<dbReference type="EC" id="1.8.98.2"/>
<dbReference type="EMBL" id="AC004793">
    <property type="protein sequence ID" value="AAD21682.1"/>
    <property type="status" value="ALT_SEQ"/>
    <property type="molecule type" value="Genomic_DNA"/>
</dbReference>
<dbReference type="EMBL" id="CP002684">
    <property type="protein sequence ID" value="AEE31321.1"/>
    <property type="molecule type" value="Genomic_DNA"/>
</dbReference>
<dbReference type="EMBL" id="CP002684">
    <property type="protein sequence ID" value="AEE31322.1"/>
    <property type="molecule type" value="Genomic_DNA"/>
</dbReference>
<dbReference type="EMBL" id="CP002684">
    <property type="protein sequence ID" value="AEE31323.1"/>
    <property type="molecule type" value="Genomic_DNA"/>
</dbReference>
<dbReference type="EMBL" id="AK117789">
    <property type="protein sequence ID" value="BAC42435.1"/>
    <property type="molecule type" value="mRNA"/>
</dbReference>
<dbReference type="EMBL" id="BT004731">
    <property type="protein sequence ID" value="AAO42977.1"/>
    <property type="molecule type" value="mRNA"/>
</dbReference>
<dbReference type="EMBL" id="AY086792">
    <property type="protein sequence ID" value="AAM63841.1"/>
    <property type="molecule type" value="mRNA"/>
</dbReference>
<dbReference type="PIR" id="F86437">
    <property type="entry name" value="F86437"/>
</dbReference>
<dbReference type="RefSeq" id="NP_001077637.1">
    <molecule id="Q8GY89-1"/>
    <property type="nucleotide sequence ID" value="NM_001084168.1"/>
</dbReference>
<dbReference type="RefSeq" id="NP_001077638.1">
    <molecule id="Q8GY89-2"/>
    <property type="nucleotide sequence ID" value="NM_001084169.1"/>
</dbReference>
<dbReference type="RefSeq" id="NP_564375.1">
    <molecule id="Q8GY89-1"/>
    <property type="nucleotide sequence ID" value="NM_102855.4"/>
</dbReference>
<dbReference type="PDB" id="6KY4">
    <property type="method" value="X-ray"/>
    <property type="resolution" value="3.20 A"/>
    <property type="chains" value="A=23-125"/>
</dbReference>
<dbReference type="PDBsum" id="6KY4"/>
<dbReference type="SMR" id="Q8GY89"/>
<dbReference type="BioGRID" id="25239">
    <property type="interactions" value="1"/>
</dbReference>
<dbReference type="FunCoup" id="Q8GY89">
    <property type="interactions" value="195"/>
</dbReference>
<dbReference type="STRING" id="3702.Q8GY89"/>
<dbReference type="PaxDb" id="3702-AT1G31170.4"/>
<dbReference type="ProteomicsDB" id="228382">
    <molecule id="Q8GY89-1"/>
</dbReference>
<dbReference type="EnsemblPlants" id="AT1G31170.1">
    <molecule id="Q8GY89-1"/>
    <property type="protein sequence ID" value="AT1G31170.1"/>
    <property type="gene ID" value="AT1G31170"/>
</dbReference>
<dbReference type="EnsemblPlants" id="AT1G31170.2">
    <molecule id="Q8GY89-1"/>
    <property type="protein sequence ID" value="AT1G31170.2"/>
    <property type="gene ID" value="AT1G31170"/>
</dbReference>
<dbReference type="EnsemblPlants" id="AT1G31170.3">
    <molecule id="Q8GY89-2"/>
    <property type="protein sequence ID" value="AT1G31170.3"/>
    <property type="gene ID" value="AT1G31170"/>
</dbReference>
<dbReference type="GeneID" id="840004"/>
<dbReference type="Gramene" id="AT1G31170.1">
    <molecule id="Q8GY89-1"/>
    <property type="protein sequence ID" value="AT1G31170.1"/>
    <property type="gene ID" value="AT1G31170"/>
</dbReference>
<dbReference type="Gramene" id="AT1G31170.2">
    <molecule id="Q8GY89-1"/>
    <property type="protein sequence ID" value="AT1G31170.2"/>
    <property type="gene ID" value="AT1G31170"/>
</dbReference>
<dbReference type="Gramene" id="AT1G31170.3">
    <molecule id="Q8GY89-2"/>
    <property type="protein sequence ID" value="AT1G31170.3"/>
    <property type="gene ID" value="AT1G31170"/>
</dbReference>
<dbReference type="KEGG" id="ath:AT1G31170"/>
<dbReference type="Araport" id="AT1G31170"/>
<dbReference type="TAIR" id="AT1G31170">
    <property type="gene designation" value="SRX"/>
</dbReference>
<dbReference type="eggNOG" id="KOG3388">
    <property type="taxonomic scope" value="Eukaryota"/>
</dbReference>
<dbReference type="HOGENOM" id="CLU_124532_3_0_1"/>
<dbReference type="InParanoid" id="Q8GY89"/>
<dbReference type="OMA" id="CHRFEAC"/>
<dbReference type="OrthoDB" id="10023328at2759"/>
<dbReference type="PhylomeDB" id="Q8GY89"/>
<dbReference type="BRENDA" id="1.8.98.2">
    <property type="organism ID" value="399"/>
</dbReference>
<dbReference type="PRO" id="PR:Q8GY89"/>
<dbReference type="Proteomes" id="UP000006548">
    <property type="component" value="Chromosome 1"/>
</dbReference>
<dbReference type="ExpressionAtlas" id="Q8GY89">
    <property type="expression patterns" value="baseline and differential"/>
</dbReference>
<dbReference type="GO" id="GO:0009507">
    <property type="term" value="C:chloroplast"/>
    <property type="evidence" value="ECO:0000314"/>
    <property type="project" value="UniProtKB"/>
</dbReference>
<dbReference type="GO" id="GO:0005739">
    <property type="term" value="C:mitochondrion"/>
    <property type="evidence" value="ECO:0000314"/>
    <property type="project" value="UniProtKB"/>
</dbReference>
<dbReference type="GO" id="GO:0005524">
    <property type="term" value="F:ATP binding"/>
    <property type="evidence" value="ECO:0007669"/>
    <property type="project" value="UniProtKB-KW"/>
</dbReference>
<dbReference type="GO" id="GO:0032542">
    <property type="term" value="F:sulfiredoxin activity"/>
    <property type="evidence" value="ECO:0007669"/>
    <property type="project" value="UniProtKB-EC"/>
</dbReference>
<dbReference type="CDD" id="cd16395">
    <property type="entry name" value="Srx"/>
    <property type="match status" value="1"/>
</dbReference>
<dbReference type="FunFam" id="3.90.1530.10:FF:000003">
    <property type="entry name" value="Sulfiredoxin chloroplastic/mitochondrial"/>
    <property type="match status" value="1"/>
</dbReference>
<dbReference type="Gene3D" id="3.90.1530.10">
    <property type="entry name" value="Conserved hypothetical protein from pyrococcus furiosus pfu- 392566-001, ParB domain"/>
    <property type="match status" value="1"/>
</dbReference>
<dbReference type="InterPro" id="IPR003115">
    <property type="entry name" value="ParB/Sulfiredoxin_dom"/>
</dbReference>
<dbReference type="InterPro" id="IPR036086">
    <property type="entry name" value="ParB/Sulfiredoxin_sf"/>
</dbReference>
<dbReference type="InterPro" id="IPR016692">
    <property type="entry name" value="Sulfiredoxin"/>
</dbReference>
<dbReference type="PANTHER" id="PTHR21348">
    <property type="match status" value="1"/>
</dbReference>
<dbReference type="PANTHER" id="PTHR21348:SF2">
    <property type="entry name" value="SULFIREDOXIN-1"/>
    <property type="match status" value="1"/>
</dbReference>
<dbReference type="Pfam" id="PF02195">
    <property type="entry name" value="ParBc"/>
    <property type="match status" value="1"/>
</dbReference>
<dbReference type="PIRSF" id="PIRSF017267">
    <property type="entry name" value="Sulfiredoxin"/>
    <property type="match status" value="1"/>
</dbReference>
<dbReference type="SMART" id="SM00470">
    <property type="entry name" value="ParB"/>
    <property type="match status" value="1"/>
</dbReference>
<dbReference type="SUPFAM" id="SSF110849">
    <property type="entry name" value="ParB/Sulfiredoxin"/>
    <property type="match status" value="1"/>
</dbReference>